<reference key="1">
    <citation type="submission" date="2007-08" db="EMBL/GenBank/DDBJ databases">
        <title>Complete sequence of Shewanella sediminis HAW-EB3.</title>
        <authorList>
            <consortium name="US DOE Joint Genome Institute"/>
            <person name="Copeland A."/>
            <person name="Lucas S."/>
            <person name="Lapidus A."/>
            <person name="Barry K."/>
            <person name="Glavina del Rio T."/>
            <person name="Dalin E."/>
            <person name="Tice H."/>
            <person name="Pitluck S."/>
            <person name="Chertkov O."/>
            <person name="Brettin T."/>
            <person name="Bruce D."/>
            <person name="Detter J.C."/>
            <person name="Han C."/>
            <person name="Schmutz J."/>
            <person name="Larimer F."/>
            <person name="Land M."/>
            <person name="Hauser L."/>
            <person name="Kyrpides N."/>
            <person name="Kim E."/>
            <person name="Zhao J.-S."/>
            <person name="Richardson P."/>
        </authorList>
    </citation>
    <scope>NUCLEOTIDE SEQUENCE [LARGE SCALE GENOMIC DNA]</scope>
    <source>
        <strain>HAW-EB3</strain>
    </source>
</reference>
<comment type="function">
    <text evidence="1">Catalyzes the methylthiolation of N6-(dimethylallyl)adenosine (i(6)A), leading to the formation of 2-methylthio-N6-(dimethylallyl)adenosine (ms(2)i(6)A) at position 37 in tRNAs that read codons beginning with uridine.</text>
</comment>
<comment type="catalytic activity">
    <reaction evidence="1">
        <text>N(6)-dimethylallyladenosine(37) in tRNA + (sulfur carrier)-SH + AH2 + 2 S-adenosyl-L-methionine = 2-methylsulfanyl-N(6)-dimethylallyladenosine(37) in tRNA + (sulfur carrier)-H + 5'-deoxyadenosine + L-methionine + A + S-adenosyl-L-homocysteine + 2 H(+)</text>
        <dbReference type="Rhea" id="RHEA:37067"/>
        <dbReference type="Rhea" id="RHEA-COMP:10375"/>
        <dbReference type="Rhea" id="RHEA-COMP:10376"/>
        <dbReference type="Rhea" id="RHEA-COMP:14737"/>
        <dbReference type="Rhea" id="RHEA-COMP:14739"/>
        <dbReference type="ChEBI" id="CHEBI:13193"/>
        <dbReference type="ChEBI" id="CHEBI:15378"/>
        <dbReference type="ChEBI" id="CHEBI:17319"/>
        <dbReference type="ChEBI" id="CHEBI:17499"/>
        <dbReference type="ChEBI" id="CHEBI:29917"/>
        <dbReference type="ChEBI" id="CHEBI:57844"/>
        <dbReference type="ChEBI" id="CHEBI:57856"/>
        <dbReference type="ChEBI" id="CHEBI:59789"/>
        <dbReference type="ChEBI" id="CHEBI:64428"/>
        <dbReference type="ChEBI" id="CHEBI:74415"/>
        <dbReference type="ChEBI" id="CHEBI:74417"/>
        <dbReference type="EC" id="2.8.4.3"/>
    </reaction>
</comment>
<comment type="cofactor">
    <cofactor evidence="1">
        <name>[4Fe-4S] cluster</name>
        <dbReference type="ChEBI" id="CHEBI:49883"/>
    </cofactor>
    <text evidence="1">Binds 2 [4Fe-4S] clusters. One cluster is coordinated with 3 cysteines and an exchangeable S-adenosyl-L-methionine.</text>
</comment>
<comment type="subunit">
    <text evidence="1">Monomer.</text>
</comment>
<comment type="subcellular location">
    <subcellularLocation>
        <location evidence="1">Cytoplasm</location>
    </subcellularLocation>
</comment>
<comment type="similarity">
    <text evidence="1">Belongs to the methylthiotransferase family. MiaB subfamily.</text>
</comment>
<keyword id="KW-0004">4Fe-4S</keyword>
<keyword id="KW-0963">Cytoplasm</keyword>
<keyword id="KW-0408">Iron</keyword>
<keyword id="KW-0411">Iron-sulfur</keyword>
<keyword id="KW-0479">Metal-binding</keyword>
<keyword id="KW-1185">Reference proteome</keyword>
<keyword id="KW-0949">S-adenosyl-L-methionine</keyword>
<keyword id="KW-0808">Transferase</keyword>
<keyword id="KW-0819">tRNA processing</keyword>
<dbReference type="EC" id="2.8.4.3" evidence="1"/>
<dbReference type="EMBL" id="CP000821">
    <property type="protein sequence ID" value="ABV38075.1"/>
    <property type="molecule type" value="Genomic_DNA"/>
</dbReference>
<dbReference type="RefSeq" id="WP_012143805.1">
    <property type="nucleotide sequence ID" value="NC_009831.1"/>
</dbReference>
<dbReference type="SMR" id="A8FZ02"/>
<dbReference type="STRING" id="425104.Ssed_3471"/>
<dbReference type="KEGG" id="sse:Ssed_3471"/>
<dbReference type="eggNOG" id="COG0621">
    <property type="taxonomic scope" value="Bacteria"/>
</dbReference>
<dbReference type="HOGENOM" id="CLU_018697_2_0_6"/>
<dbReference type="OrthoDB" id="9805215at2"/>
<dbReference type="Proteomes" id="UP000002015">
    <property type="component" value="Chromosome"/>
</dbReference>
<dbReference type="GO" id="GO:0005829">
    <property type="term" value="C:cytosol"/>
    <property type="evidence" value="ECO:0007669"/>
    <property type="project" value="TreeGrafter"/>
</dbReference>
<dbReference type="GO" id="GO:0051539">
    <property type="term" value="F:4 iron, 4 sulfur cluster binding"/>
    <property type="evidence" value="ECO:0007669"/>
    <property type="project" value="UniProtKB-UniRule"/>
</dbReference>
<dbReference type="GO" id="GO:0046872">
    <property type="term" value="F:metal ion binding"/>
    <property type="evidence" value="ECO:0007669"/>
    <property type="project" value="UniProtKB-KW"/>
</dbReference>
<dbReference type="GO" id="GO:0035597">
    <property type="term" value="F:N6-isopentenyladenosine methylthiotransferase activity"/>
    <property type="evidence" value="ECO:0007669"/>
    <property type="project" value="TreeGrafter"/>
</dbReference>
<dbReference type="CDD" id="cd01335">
    <property type="entry name" value="Radical_SAM"/>
    <property type="match status" value="1"/>
</dbReference>
<dbReference type="FunFam" id="3.40.50.12160:FF:000001">
    <property type="entry name" value="tRNA-2-methylthio-N(6)-dimethylallyladenosine synthase"/>
    <property type="match status" value="1"/>
</dbReference>
<dbReference type="FunFam" id="3.80.30.20:FF:000001">
    <property type="entry name" value="tRNA-2-methylthio-N(6)-dimethylallyladenosine synthase 2"/>
    <property type="match status" value="1"/>
</dbReference>
<dbReference type="Gene3D" id="3.40.50.12160">
    <property type="entry name" value="Methylthiotransferase, N-terminal domain"/>
    <property type="match status" value="1"/>
</dbReference>
<dbReference type="Gene3D" id="3.80.30.20">
    <property type="entry name" value="tm_1862 like domain"/>
    <property type="match status" value="1"/>
</dbReference>
<dbReference type="HAMAP" id="MF_01864">
    <property type="entry name" value="tRNA_metthiotr_MiaB"/>
    <property type="match status" value="1"/>
</dbReference>
<dbReference type="InterPro" id="IPR006638">
    <property type="entry name" value="Elp3/MiaA/NifB-like_rSAM"/>
</dbReference>
<dbReference type="InterPro" id="IPR005839">
    <property type="entry name" value="Methylthiotransferase"/>
</dbReference>
<dbReference type="InterPro" id="IPR020612">
    <property type="entry name" value="Methylthiotransferase_CS"/>
</dbReference>
<dbReference type="InterPro" id="IPR013848">
    <property type="entry name" value="Methylthiotransferase_N"/>
</dbReference>
<dbReference type="InterPro" id="IPR038135">
    <property type="entry name" value="Methylthiotransferase_N_sf"/>
</dbReference>
<dbReference type="InterPro" id="IPR006463">
    <property type="entry name" value="MiaB_methiolase"/>
</dbReference>
<dbReference type="InterPro" id="IPR007197">
    <property type="entry name" value="rSAM"/>
</dbReference>
<dbReference type="InterPro" id="IPR023404">
    <property type="entry name" value="rSAM_horseshoe"/>
</dbReference>
<dbReference type="InterPro" id="IPR002792">
    <property type="entry name" value="TRAM_dom"/>
</dbReference>
<dbReference type="NCBIfam" id="TIGR01574">
    <property type="entry name" value="miaB-methiolase"/>
    <property type="match status" value="1"/>
</dbReference>
<dbReference type="NCBIfam" id="TIGR00089">
    <property type="entry name" value="MiaB/RimO family radical SAM methylthiotransferase"/>
    <property type="match status" value="1"/>
</dbReference>
<dbReference type="PANTHER" id="PTHR43020">
    <property type="entry name" value="CDK5 REGULATORY SUBUNIT-ASSOCIATED PROTEIN 1"/>
    <property type="match status" value="1"/>
</dbReference>
<dbReference type="PANTHER" id="PTHR43020:SF2">
    <property type="entry name" value="MITOCHONDRIAL TRNA METHYLTHIOTRANSFERASE CDK5RAP1"/>
    <property type="match status" value="1"/>
</dbReference>
<dbReference type="Pfam" id="PF04055">
    <property type="entry name" value="Radical_SAM"/>
    <property type="match status" value="1"/>
</dbReference>
<dbReference type="Pfam" id="PF01938">
    <property type="entry name" value="TRAM"/>
    <property type="match status" value="1"/>
</dbReference>
<dbReference type="Pfam" id="PF00919">
    <property type="entry name" value="UPF0004"/>
    <property type="match status" value="1"/>
</dbReference>
<dbReference type="SFLD" id="SFLDF00273">
    <property type="entry name" value="(dimethylallyl)adenosine_tRNA"/>
    <property type="match status" value="1"/>
</dbReference>
<dbReference type="SFLD" id="SFLDG01082">
    <property type="entry name" value="B12-binding_domain_containing"/>
    <property type="match status" value="1"/>
</dbReference>
<dbReference type="SFLD" id="SFLDG01061">
    <property type="entry name" value="methylthiotransferase"/>
    <property type="match status" value="1"/>
</dbReference>
<dbReference type="SMART" id="SM00729">
    <property type="entry name" value="Elp3"/>
    <property type="match status" value="1"/>
</dbReference>
<dbReference type="SUPFAM" id="SSF102114">
    <property type="entry name" value="Radical SAM enzymes"/>
    <property type="match status" value="1"/>
</dbReference>
<dbReference type="PROSITE" id="PS51449">
    <property type="entry name" value="MTTASE_N"/>
    <property type="match status" value="1"/>
</dbReference>
<dbReference type="PROSITE" id="PS01278">
    <property type="entry name" value="MTTASE_RADICAL"/>
    <property type="match status" value="1"/>
</dbReference>
<dbReference type="PROSITE" id="PS51918">
    <property type="entry name" value="RADICAL_SAM"/>
    <property type="match status" value="1"/>
</dbReference>
<dbReference type="PROSITE" id="PS50926">
    <property type="entry name" value="TRAM"/>
    <property type="match status" value="1"/>
</dbReference>
<gene>
    <name evidence="1" type="primary">miaB</name>
    <name type="ordered locus">Ssed_3471</name>
</gene>
<protein>
    <recommendedName>
        <fullName evidence="1">tRNA-2-methylthio-N(6)-dimethylallyladenosine synthase</fullName>
        <ecNumber evidence="1">2.8.4.3</ecNumber>
    </recommendedName>
    <alternativeName>
        <fullName evidence="1">(Dimethylallyl)adenosine tRNA methylthiotransferase MiaB</fullName>
    </alternativeName>
    <alternativeName>
        <fullName evidence="1">tRNA-i(6)A37 methylthiotransferase</fullName>
    </alternativeName>
</protein>
<proteinExistence type="inferred from homology"/>
<organism>
    <name type="scientific">Shewanella sediminis (strain HAW-EB3)</name>
    <dbReference type="NCBI Taxonomy" id="425104"/>
    <lineage>
        <taxon>Bacteria</taxon>
        <taxon>Pseudomonadati</taxon>
        <taxon>Pseudomonadota</taxon>
        <taxon>Gammaproteobacteria</taxon>
        <taxon>Alteromonadales</taxon>
        <taxon>Shewanellaceae</taxon>
        <taxon>Shewanella</taxon>
    </lineage>
</organism>
<evidence type="ECO:0000255" key="1">
    <source>
        <dbReference type="HAMAP-Rule" id="MF_01864"/>
    </source>
</evidence>
<evidence type="ECO:0000255" key="2">
    <source>
        <dbReference type="PROSITE-ProRule" id="PRU01266"/>
    </source>
</evidence>
<accession>A8FZ02</accession>
<sequence>MSKKLHIKTWGCQMNEYDSSKMADLMDEYEGYTLTEEASEADVLLLNTCSIREKAQEKVFHQLGRWKKLKEKNPDLIIGVGGCVASQEGKVIKERAQCVDLIFGPQTLHRLPEMIDQIRDGGKAVIDISFPEIEKFDKLPEPRADGPSAFVSIMEGCSKYCSFCVVPYTRGEEVSRPLDDIILEIAQLADQGVREVNLLGQNVNAYRGATHDDEICTFAELLRYVAAIDGIDRLRFTTSHPIEFTQDIIDVYEDTPELVSFLHLPVQSGSDRILTQMKRGHMAIEYKSIIRRLRKARPDIQISSDFIIGFPGESKQDFADTMKLIEDVQFDHSFSFIYSARPGTPAADLPDDVTLAEKKERLAILQDRITQQAMRYSRQMLGTVQRILVEGPSVKNPMELRGRTETSRVVNFEADPKHIGSFVDVEIVDVYTNSLRGTFVRGEDEMDLRRSLTPSDILAKHKKDDDLGVTQYIP</sequence>
<feature type="chain" id="PRO_0000374544" description="tRNA-2-methylthio-N(6)-dimethylallyladenosine synthase">
    <location>
        <begin position="1"/>
        <end position="474"/>
    </location>
</feature>
<feature type="domain" description="MTTase N-terminal" evidence="1">
    <location>
        <begin position="3"/>
        <end position="120"/>
    </location>
</feature>
<feature type="domain" description="Radical SAM core" evidence="2">
    <location>
        <begin position="143"/>
        <end position="375"/>
    </location>
</feature>
<feature type="domain" description="TRAM" evidence="1">
    <location>
        <begin position="378"/>
        <end position="441"/>
    </location>
</feature>
<feature type="binding site" evidence="1">
    <location>
        <position position="12"/>
    </location>
    <ligand>
        <name>[4Fe-4S] cluster</name>
        <dbReference type="ChEBI" id="CHEBI:49883"/>
        <label>1</label>
    </ligand>
</feature>
<feature type="binding site" evidence="1">
    <location>
        <position position="49"/>
    </location>
    <ligand>
        <name>[4Fe-4S] cluster</name>
        <dbReference type="ChEBI" id="CHEBI:49883"/>
        <label>1</label>
    </ligand>
</feature>
<feature type="binding site" evidence="1">
    <location>
        <position position="83"/>
    </location>
    <ligand>
        <name>[4Fe-4S] cluster</name>
        <dbReference type="ChEBI" id="CHEBI:49883"/>
        <label>1</label>
    </ligand>
</feature>
<feature type="binding site" evidence="1">
    <location>
        <position position="157"/>
    </location>
    <ligand>
        <name>[4Fe-4S] cluster</name>
        <dbReference type="ChEBI" id="CHEBI:49883"/>
        <label>2</label>
        <note>4Fe-4S-S-AdoMet</note>
    </ligand>
</feature>
<feature type="binding site" evidence="1">
    <location>
        <position position="161"/>
    </location>
    <ligand>
        <name>[4Fe-4S] cluster</name>
        <dbReference type="ChEBI" id="CHEBI:49883"/>
        <label>2</label>
        <note>4Fe-4S-S-AdoMet</note>
    </ligand>
</feature>
<feature type="binding site" evidence="1">
    <location>
        <position position="164"/>
    </location>
    <ligand>
        <name>[4Fe-4S] cluster</name>
        <dbReference type="ChEBI" id="CHEBI:49883"/>
        <label>2</label>
        <note>4Fe-4S-S-AdoMet</note>
    </ligand>
</feature>
<name>MIAB_SHESH</name>